<comment type="function">
    <text evidence="2 5">Participates in sulfate respiration coupled with phosphorylation by transferring electrons from the enzyme dehydrogenase to ferredoxin (By similarity). Gamma chain of the formate dehydrogenase (FDH) that catalyzes the reversible two-electron oxidation of formate to carbon dioxide. The gamma subunit of formate dehydrogenase forms a c-type heme.</text>
</comment>
<comment type="biophysicochemical properties">
    <kinetics>
        <KM evidence="5">1.7 mM for formate (at pH 9.5 and 30 degrees Celsius)</KM>
        <KM evidence="4">8 uM for formate (at pH 7.6)</KM>
        <Vmax evidence="4">77.0 umol/min/mg enzyme (at pH 7.6)</Vmax>
        <text evidence="4">Measurements have been done with the heterotrimer complex. kcat is 262 sec(-1) with formate as substrate (at pH 7.6).</text>
    </kinetics>
    <phDependence>
        <text evidence="5">Optimum pH is 9.5.</text>
    </phDependence>
    <temperatureDependence>
        <text evidence="5">Optimum temperature is 51 degrees Celsius.</text>
    </temperatureDependence>
</comment>
<comment type="subunit">
    <text evidence="2 3 4 5">Homodimer (By similarity). Heterotrimer of cytochrome c3 FDH2C and formate dehydrogenase FDH2 alpha and beta subunits that forms the FdhABC(3) complex.</text>
</comment>
<comment type="subcellular location">
    <subcellularLocation>
        <location evidence="5">Periplasm</location>
    </subcellularLocation>
</comment>
<comment type="induction">
    <text evidence="4">The trimeric FdhABC(3) complex is the main formate dehydrogenase enzyme in the presence of molybdenum.</text>
</comment>
<comment type="PTM">
    <text evidence="2">Binds 4 heme c groups per subunit.</text>
</comment>
<comment type="miscellaneous">
    <text evidence="1">The second heme binding site has an unusual CXXXXCH motif.</text>
</comment>
<comment type="similarity">
    <text evidence="8">Belongs to the cytochrome c family.</text>
</comment>
<evidence type="ECO:0000250" key="1">
    <source>
        <dbReference type="UniProtKB" id="P00133"/>
    </source>
</evidence>
<evidence type="ECO:0000250" key="2">
    <source>
        <dbReference type="UniProtKB" id="P38554"/>
    </source>
</evidence>
<evidence type="ECO:0000269" key="3">
    <source>
    </source>
</evidence>
<evidence type="ECO:0000269" key="4">
    <source>
    </source>
</evidence>
<evidence type="ECO:0000269" key="5">
    <source>
    </source>
</evidence>
<evidence type="ECO:0000303" key="6">
    <source>
    </source>
</evidence>
<evidence type="ECO:0000303" key="7">
    <source>
    </source>
</evidence>
<evidence type="ECO:0000305" key="8"/>
<evidence type="ECO:0000312" key="9">
    <source>
        <dbReference type="EMBL" id="AAS97281.1"/>
    </source>
</evidence>
<reference key="1">
    <citation type="journal article" date="2004" name="Nat. Biotechnol.">
        <title>The genome sequence of the anaerobic, sulfate-reducing bacterium Desulfovibrio vulgaris Hildenborough.</title>
        <authorList>
            <person name="Heidelberg J.F."/>
            <person name="Seshadri R."/>
            <person name="Haveman S.A."/>
            <person name="Hemme C.L."/>
            <person name="Paulsen I.T."/>
            <person name="Kolonay J.F."/>
            <person name="Eisen J.A."/>
            <person name="Ward N.L."/>
            <person name="Methe B.A."/>
            <person name="Brinkac L.M."/>
            <person name="Daugherty S.C."/>
            <person name="DeBoy R.T."/>
            <person name="Dodson R.J."/>
            <person name="Durkin A.S."/>
            <person name="Madupu R."/>
            <person name="Nelson W.C."/>
            <person name="Sullivan S.A."/>
            <person name="Fouts D.E."/>
            <person name="Haft D.H."/>
            <person name="Selengut J."/>
            <person name="Peterson J.D."/>
            <person name="Davidsen T.M."/>
            <person name="Zafar N."/>
            <person name="Zhou L."/>
            <person name="Radune D."/>
            <person name="Dimitrov G."/>
            <person name="Hance M."/>
            <person name="Tran K."/>
            <person name="Khouri H.M."/>
            <person name="Gill J."/>
            <person name="Utterback T.R."/>
            <person name="Feldblyum T.V."/>
            <person name="Wall J.D."/>
            <person name="Voordouw G."/>
            <person name="Fraser C.M."/>
        </authorList>
    </citation>
    <scope>NUCLEOTIDE SEQUENCE [LARGE SCALE GENOMIC DNA]</scope>
    <source>
        <strain>ATCC 29579 / DSM 644 / CCUG 34227 / NCIMB 8303 / VKM B-1760 / Hildenborough</strain>
    </source>
</reference>
<reference key="2">
    <citation type="journal article" date="1995" name="FEMS Microbiol. Lett.">
        <title>Purification and characterization of the formate dehydrogenase from Desulfovibrio vulgaris Hildenborough.</title>
        <authorList>
            <person name="Sebban C."/>
            <person name="Blanchard L."/>
            <person name="Bruschi M."/>
            <person name="Guerlesquin F."/>
        </authorList>
    </citation>
    <scope>PROTEIN SEQUENCE OF 25-39</scope>
    <scope>SUBUNIT</scope>
    <scope>SUBCELLULAR LOCATION</scope>
    <scope>BIOPHYSICOCHEMICAL PROPERTIES</scope>
</reference>
<reference key="3">
    <citation type="journal article" date="2005" name="Biochemistry">
        <title>Role of the tetrahemic subunit in Desulfovibrio vulgaris hildenborough formate dehydrogenase.</title>
        <authorList>
            <person name="ElAntak L."/>
            <person name="Dolla A."/>
            <person name="Durand M.C."/>
            <person name="Bianco P."/>
            <person name="Guerlesquin F."/>
        </authorList>
    </citation>
    <scope>PROTEIN SEQUENCE OF N-TERMINUS</scope>
    <scope>SUBUNIT</scope>
    <scope>NOMENCLATURE</scope>
</reference>
<reference key="4">
    <citation type="journal article" date="2011" name="J. Bacteriol.">
        <title>Tungsten and molybdenum regulation of formate dehydrogenase expression in Desulfovibrio vulgaris Hildenborough.</title>
        <authorList>
            <person name="da Silva S.M."/>
            <person name="Pimentel C."/>
            <person name="Valente F.M."/>
            <person name="Rodrigues-Pousada C."/>
            <person name="Pereira I.A."/>
        </authorList>
    </citation>
    <scope>SUBUNIT</scope>
    <scope>INDUCTION BY MOLYBDENUM</scope>
    <scope>BIOPHYSICOCHEMICAL PROPERTIES</scope>
</reference>
<protein>
    <recommendedName>
        <fullName evidence="7">Cytochrome c3</fullName>
    </recommendedName>
    <alternativeName>
        <fullName evidence="6">Formate dehydrogenase 2 subunit gamma (cytochrome c-553)</fullName>
        <shortName evidence="6">FDH2 subunit gamma (cytochrome c-553)</shortName>
        <shortName evidence="6">FDH2C</shortName>
    </alternativeName>
</protein>
<keyword id="KW-0903">Direct protein sequencing</keyword>
<keyword id="KW-0249">Electron transport</keyword>
<keyword id="KW-0349">Heme</keyword>
<keyword id="KW-0408">Iron</keyword>
<keyword id="KW-0479">Metal-binding</keyword>
<keyword id="KW-0574">Periplasm</keyword>
<keyword id="KW-1185">Reference proteome</keyword>
<keyword id="KW-0732">Signal</keyword>
<keyword id="KW-0763">Sulfate respiration</keyword>
<keyword id="KW-0813">Transport</keyword>
<proteinExistence type="evidence at protein level"/>
<dbReference type="EMBL" id="AE017285">
    <property type="protein sequence ID" value="AAS97281.1"/>
    <property type="molecule type" value="Genomic_DNA"/>
</dbReference>
<dbReference type="RefSeq" id="WP_010940075.1">
    <property type="nucleotide sequence ID" value="NC_002937.3"/>
</dbReference>
<dbReference type="RefSeq" id="YP_012021.1">
    <property type="nucleotide sequence ID" value="NC_002937.3"/>
</dbReference>
<dbReference type="STRING" id="882.DVU_2809"/>
<dbReference type="PaxDb" id="882-DVU_2809"/>
<dbReference type="EnsemblBacteria" id="AAS97281">
    <property type="protein sequence ID" value="AAS97281"/>
    <property type="gene ID" value="DVU_2809"/>
</dbReference>
<dbReference type="KEGG" id="dvu:DVU_2809"/>
<dbReference type="PATRIC" id="fig|882.5.peg.2541"/>
<dbReference type="eggNOG" id="ENOG5032JRW">
    <property type="taxonomic scope" value="Bacteria"/>
</dbReference>
<dbReference type="HOGENOM" id="CLU_125874_3_1_7"/>
<dbReference type="OrthoDB" id="5418612at2"/>
<dbReference type="BioCyc" id="MetaCyc:MONOMER-22137"/>
<dbReference type="Proteomes" id="UP000002194">
    <property type="component" value="Chromosome"/>
</dbReference>
<dbReference type="GO" id="GO:0009326">
    <property type="term" value="C:formate dehydrogenase complex"/>
    <property type="evidence" value="ECO:0000314"/>
    <property type="project" value="UniProtKB"/>
</dbReference>
<dbReference type="GO" id="GO:0042597">
    <property type="term" value="C:periplasmic space"/>
    <property type="evidence" value="ECO:0000314"/>
    <property type="project" value="UniProtKB"/>
</dbReference>
<dbReference type="GO" id="GO:0009055">
    <property type="term" value="F:electron transfer activity"/>
    <property type="evidence" value="ECO:0007669"/>
    <property type="project" value="InterPro"/>
</dbReference>
<dbReference type="GO" id="GO:0020037">
    <property type="term" value="F:heme binding"/>
    <property type="evidence" value="ECO:0007669"/>
    <property type="project" value="InterPro"/>
</dbReference>
<dbReference type="GO" id="GO:0046872">
    <property type="term" value="F:metal ion binding"/>
    <property type="evidence" value="ECO:0007669"/>
    <property type="project" value="UniProtKB-KW"/>
</dbReference>
<dbReference type="GO" id="GO:0009061">
    <property type="term" value="P:anaerobic respiration"/>
    <property type="evidence" value="ECO:0007669"/>
    <property type="project" value="UniProtKB-KW"/>
</dbReference>
<dbReference type="CDD" id="cd08168">
    <property type="entry name" value="Cytochrom_C3"/>
    <property type="match status" value="1"/>
</dbReference>
<dbReference type="Gene3D" id="3.90.10.10">
    <property type="entry name" value="Cytochrome C3"/>
    <property type="match status" value="1"/>
</dbReference>
<dbReference type="InterPro" id="IPR002322">
    <property type="entry name" value="Cyt_c_III"/>
</dbReference>
<dbReference type="InterPro" id="IPR020942">
    <property type="entry name" value="Cyt_c_III_dom"/>
</dbReference>
<dbReference type="InterPro" id="IPR036280">
    <property type="entry name" value="Multihaem_cyt_sf"/>
</dbReference>
<dbReference type="Pfam" id="PF02085">
    <property type="entry name" value="Cytochrom_CIII"/>
    <property type="match status" value="1"/>
</dbReference>
<dbReference type="PRINTS" id="PR00609">
    <property type="entry name" value="CYTOCHROMEC3"/>
</dbReference>
<dbReference type="SUPFAM" id="SSF48695">
    <property type="entry name" value="Multiheme cytochromes"/>
    <property type="match status" value="1"/>
</dbReference>
<dbReference type="PROSITE" id="PS51008">
    <property type="entry name" value="MULTIHEME_CYTC"/>
    <property type="match status" value="1"/>
</dbReference>
<gene>
    <name evidence="9" type="ordered locus">DVU_2809</name>
</gene>
<accession>Q727P6</accession>
<feature type="signal peptide" evidence="3 5">
    <location>
        <begin position="1"/>
        <end position="24"/>
    </location>
</feature>
<feature type="chain" id="PRO_0000430782" description="Cytochrome c3">
    <location>
        <begin position="25"/>
        <end position="144"/>
    </location>
</feature>
<feature type="binding site" description="axial binding residue" evidence="2">
    <location>
        <position position="51"/>
    </location>
    <ligand>
        <name>heme c</name>
        <dbReference type="ChEBI" id="CHEBI:61717"/>
        <label>1</label>
    </ligand>
    <ligandPart>
        <name>Fe</name>
        <dbReference type="ChEBI" id="CHEBI:18248"/>
    </ligandPart>
</feature>
<feature type="binding site" description="axial binding residue" evidence="2">
    <location>
        <position position="54"/>
    </location>
    <ligand>
        <name>heme c</name>
        <dbReference type="ChEBI" id="CHEBI:61717"/>
        <label>3</label>
    </ligand>
    <ligandPart>
        <name>Fe</name>
        <dbReference type="ChEBI" id="CHEBI:18248"/>
    </ligandPart>
</feature>
<feature type="binding site" description="covalent" evidence="2">
    <location>
        <position position="59"/>
    </location>
    <ligand>
        <name>heme c</name>
        <dbReference type="ChEBI" id="CHEBI:61717"/>
        <label>1</label>
    </ligand>
</feature>
<feature type="binding site" description="covalent" evidence="2">
    <location>
        <position position="62"/>
    </location>
    <ligand>
        <name>heme c</name>
        <dbReference type="ChEBI" id="CHEBI:61717"/>
        <label>1</label>
    </ligand>
</feature>
<feature type="binding site" description="axial binding residue" evidence="2">
    <location>
        <position position="63"/>
    </location>
    <ligand>
        <name>heme c</name>
        <dbReference type="ChEBI" id="CHEBI:61717"/>
        <label>1</label>
    </ligand>
    <ligandPart>
        <name>Fe</name>
        <dbReference type="ChEBI" id="CHEBI:18248"/>
    </ligandPart>
</feature>
<feature type="binding site" description="axial binding residue" evidence="2">
    <location>
        <position position="64"/>
    </location>
    <ligand>
        <name>heme c</name>
        <dbReference type="ChEBI" id="CHEBI:61717"/>
        <label>2</label>
    </ligand>
    <ligandPart>
        <name>Fe</name>
        <dbReference type="ChEBI" id="CHEBI:18248"/>
    </ligandPart>
</feature>
<feature type="binding site" description="covalent" evidence="2">
    <location>
        <position position="76"/>
    </location>
    <ligand>
        <name>heme c</name>
        <dbReference type="ChEBI" id="CHEBI:61717"/>
        <label>2</label>
    </ligand>
</feature>
<feature type="binding site" description="covalent" evidence="2">
    <location>
        <position position="81"/>
    </location>
    <ligand>
        <name>heme c</name>
        <dbReference type="ChEBI" id="CHEBI:61717"/>
        <label>2</label>
    </ligand>
</feature>
<feature type="binding site" description="axial binding residue" evidence="2">
    <location>
        <position position="82"/>
    </location>
    <ligand>
        <name>heme c</name>
        <dbReference type="ChEBI" id="CHEBI:61717"/>
        <label>2</label>
    </ligand>
    <ligandPart>
        <name>Fe</name>
        <dbReference type="ChEBI" id="CHEBI:18248"/>
    </ligandPart>
</feature>
<feature type="binding site" description="axial binding residue" evidence="2">
    <location>
        <position position="100"/>
    </location>
    <ligand>
        <name>heme c</name>
        <dbReference type="ChEBI" id="CHEBI:61717"/>
        <label>4</label>
    </ligand>
    <ligandPart>
        <name>Fe</name>
        <dbReference type="ChEBI" id="CHEBI:18248"/>
    </ligandPart>
</feature>
<feature type="binding site" description="covalent" evidence="2">
    <location>
        <position position="108"/>
    </location>
    <ligand>
        <name>heme c</name>
        <dbReference type="ChEBI" id="CHEBI:61717"/>
        <label>3</label>
    </ligand>
</feature>
<feature type="binding site" description="covalent" evidence="2">
    <location>
        <position position="111"/>
    </location>
    <ligand>
        <name>heme c</name>
        <dbReference type="ChEBI" id="CHEBI:61717"/>
        <label>3</label>
    </ligand>
</feature>
<feature type="binding site" description="axial binding residue" evidence="2">
    <location>
        <position position="112"/>
    </location>
    <ligand>
        <name>heme c</name>
        <dbReference type="ChEBI" id="CHEBI:61717"/>
        <label>3</label>
    </ligand>
    <ligandPart>
        <name>Fe</name>
        <dbReference type="ChEBI" id="CHEBI:18248"/>
    </ligandPart>
</feature>
<feature type="binding site" description="covalent" evidence="1">
    <location>
        <position position="125"/>
    </location>
    <ligand>
        <name>heme c</name>
        <dbReference type="ChEBI" id="CHEBI:61717"/>
        <label>4</label>
    </ligand>
</feature>
<feature type="binding site" description="covalent" evidence="1">
    <location>
        <position position="128"/>
    </location>
    <ligand>
        <name>heme c</name>
        <dbReference type="ChEBI" id="CHEBI:61717"/>
        <label>4</label>
    </ligand>
</feature>
<feature type="binding site" description="axial binding residue" evidence="2">
    <location>
        <position position="129"/>
    </location>
    <ligand>
        <name>heme c</name>
        <dbReference type="ChEBI" id="CHEBI:61717"/>
        <label>4</label>
    </ligand>
    <ligandPart>
        <name>Fe</name>
        <dbReference type="ChEBI" id="CHEBI:18248"/>
    </ligandPart>
</feature>
<organism>
    <name type="scientific">Nitratidesulfovibrio vulgaris (strain ATCC 29579 / DSM 644 / CCUG 34227 / NCIMB 8303 / VKM B-1760 / Hildenborough)</name>
    <name type="common">Desulfovibrio vulgaris</name>
    <dbReference type="NCBI Taxonomy" id="882"/>
    <lineage>
        <taxon>Bacteria</taxon>
        <taxon>Pseudomonadati</taxon>
        <taxon>Thermodesulfobacteriota</taxon>
        <taxon>Desulfovibrionia</taxon>
        <taxon>Desulfovibrionales</taxon>
        <taxon>Desulfovibrionaceae</taxon>
        <taxon>Nitratidesulfovibrio</taxon>
    </lineage>
</organism>
<name>CYC32_NITV2</name>
<sequence>MRYLVISLFAVSLLMAGSALVGNAADAAKAPKKAIELKHGTSKRMHVMFNHTTHKDIACEQCHHDSPAPDKPYASCTDNDCHATPGPRERDTMSMFVAYHAKDTDRSCYGCHKKMAAQHPEFTGCRPCHMSQQARKEAAASEKK</sequence>